<feature type="chain" id="PRO_0000144615" description="V-type ATP synthase alpha chain">
    <location>
        <begin position="1"/>
        <end position="591"/>
    </location>
</feature>
<feature type="binding site" evidence="1">
    <location>
        <begin position="233"/>
        <end position="240"/>
    </location>
    <ligand>
        <name>ATP</name>
        <dbReference type="ChEBI" id="CHEBI:30616"/>
    </ligand>
</feature>
<reference key="1">
    <citation type="journal article" date="2001" name="Proc. Natl. Acad. Sci. U.S.A.">
        <title>Complete genome sequence of an M1 strain of Streptococcus pyogenes.</title>
        <authorList>
            <person name="Ferretti J.J."/>
            <person name="McShan W.M."/>
            <person name="Ajdic D.J."/>
            <person name="Savic D.J."/>
            <person name="Savic G."/>
            <person name="Lyon K."/>
            <person name="Primeaux C."/>
            <person name="Sezate S."/>
            <person name="Suvorov A.N."/>
            <person name="Kenton S."/>
            <person name="Lai H.S."/>
            <person name="Lin S.P."/>
            <person name="Qian Y."/>
            <person name="Jia H.G."/>
            <person name="Najar F.Z."/>
            <person name="Ren Q."/>
            <person name="Zhu H."/>
            <person name="Song L."/>
            <person name="White J."/>
            <person name="Yuan X."/>
            <person name="Clifton S.W."/>
            <person name="Roe B.A."/>
            <person name="McLaughlin R.E."/>
        </authorList>
    </citation>
    <scope>NUCLEOTIDE SEQUENCE [LARGE SCALE GENOMIC DNA]</scope>
    <source>
        <strain>ATCC 700294 / SF370 / Serotype M1</strain>
    </source>
</reference>
<reference key="2">
    <citation type="journal article" date="2005" name="J. Infect. Dis.">
        <title>Evolutionary origin and emergence of a highly successful clone of serotype M1 group A Streptococcus involved multiple horizontal gene transfer events.</title>
        <authorList>
            <person name="Sumby P."/>
            <person name="Porcella S.F."/>
            <person name="Madrigal A.G."/>
            <person name="Barbian K.D."/>
            <person name="Virtaneva K."/>
            <person name="Ricklefs S.M."/>
            <person name="Sturdevant D.E."/>
            <person name="Graham M.R."/>
            <person name="Vuopio-Varkila J."/>
            <person name="Hoe N.P."/>
            <person name="Musser J.M."/>
        </authorList>
    </citation>
    <scope>NUCLEOTIDE SEQUENCE [LARGE SCALE GENOMIC DNA]</scope>
    <source>
        <strain>ATCC BAA-947 / MGAS5005 / Serotype M1</strain>
    </source>
</reference>
<protein>
    <recommendedName>
        <fullName evidence="1">V-type ATP synthase alpha chain</fullName>
        <ecNumber evidence="1">7.1.2.2</ecNumber>
    </recommendedName>
    <alternativeName>
        <fullName evidence="1">V-ATPase subunit A</fullName>
    </alternativeName>
</protein>
<name>VATA_STRP1</name>
<comment type="function">
    <text evidence="1">Produces ATP from ADP in the presence of a proton gradient across the membrane. The V-type alpha chain is a catalytic subunit.</text>
</comment>
<comment type="catalytic activity">
    <reaction evidence="1">
        <text>ATP + H2O + 4 H(+)(in) = ADP + phosphate + 5 H(+)(out)</text>
        <dbReference type="Rhea" id="RHEA:57720"/>
        <dbReference type="ChEBI" id="CHEBI:15377"/>
        <dbReference type="ChEBI" id="CHEBI:15378"/>
        <dbReference type="ChEBI" id="CHEBI:30616"/>
        <dbReference type="ChEBI" id="CHEBI:43474"/>
        <dbReference type="ChEBI" id="CHEBI:456216"/>
        <dbReference type="EC" id="7.1.2.2"/>
    </reaction>
</comment>
<comment type="similarity">
    <text evidence="1">Belongs to the ATPase alpha/beta chains family.</text>
</comment>
<proteinExistence type="inferred from homology"/>
<sequence>MNQGKIITVSGPLVVASGMQEANIQDICRVGHLGLVGEIIEMRRDQASIQVYEETSGIGPGEPVVTTGCPLSVELGPGLISEMFDGIQRPLDRFQKATDSDFLIRGVAIPSLDRKAKWAFIPKLSVGQEVVAGDILGTVQETAVIEHRIMVPYKVSGTLVAIHAGDFTVTDTVYEIKQEDGSIYQGSLMQTWPVRQSRPVAQKLIPVEPLVTGQRVIDTFFPVTKGGAAAVPGPFGAGKTVVQHQIAKFANVDIVIYVGCGERGNEMTDVLNEFPELIDPNTGQSIMERTVLIANTSNMPVAAREASIYTGITIAEYFRDMGYSVAIMADSTSRWAEALREMSGRLQEMPGDEGYPAYLGSRIAEYYERAGRVRTLGSQEREGTITAIGAVSPPGGDISEPVTQNTLRIVKVFWGLDAPLAQRRHFPAINWLTSYSLYQDDVGSYIDRKQQSNWSNKVTRAMAILQREASLEEIVRLVGLDSLSEQDRLTMAVARQIREDYLQQNAFDSVDTFTSFPKQEAMLTNILTFNEEASKALSLGAYFNEIMEGTAQVRDRIARSKFIPEENLEQIKGLTQKVTKEIHHVLAKGGI</sequence>
<evidence type="ECO:0000255" key="1">
    <source>
        <dbReference type="HAMAP-Rule" id="MF_00309"/>
    </source>
</evidence>
<dbReference type="EC" id="7.1.2.2" evidence="1"/>
<dbReference type="EMBL" id="AE004092">
    <property type="protein sequence ID" value="AAK33257.1"/>
    <property type="molecule type" value="Genomic_DNA"/>
</dbReference>
<dbReference type="EMBL" id="CP000017">
    <property type="protein sequence ID" value="AAZ50750.1"/>
    <property type="molecule type" value="Genomic_DNA"/>
</dbReference>
<dbReference type="RefSeq" id="NP_268536.1">
    <property type="nucleotide sequence ID" value="NC_002737.2"/>
</dbReference>
<dbReference type="SMR" id="Q9A1Q3"/>
<dbReference type="PaxDb" id="1314-HKU360_00177"/>
<dbReference type="KEGG" id="spy:SPy_0154"/>
<dbReference type="KEGG" id="spz:M5005_Spy0131"/>
<dbReference type="PATRIC" id="fig|160490.10.peg.135"/>
<dbReference type="HOGENOM" id="CLU_008162_3_1_9"/>
<dbReference type="OMA" id="RIVKTFW"/>
<dbReference type="Proteomes" id="UP000000750">
    <property type="component" value="Chromosome"/>
</dbReference>
<dbReference type="GO" id="GO:0045259">
    <property type="term" value="C:proton-transporting ATP synthase complex"/>
    <property type="evidence" value="ECO:0007669"/>
    <property type="project" value="UniProtKB-ARBA"/>
</dbReference>
<dbReference type="GO" id="GO:0005524">
    <property type="term" value="F:ATP binding"/>
    <property type="evidence" value="ECO:0007669"/>
    <property type="project" value="UniProtKB-UniRule"/>
</dbReference>
<dbReference type="GO" id="GO:0046933">
    <property type="term" value="F:proton-transporting ATP synthase activity, rotational mechanism"/>
    <property type="evidence" value="ECO:0007669"/>
    <property type="project" value="UniProtKB-UniRule"/>
</dbReference>
<dbReference type="GO" id="GO:0046961">
    <property type="term" value="F:proton-transporting ATPase activity, rotational mechanism"/>
    <property type="evidence" value="ECO:0007669"/>
    <property type="project" value="InterPro"/>
</dbReference>
<dbReference type="GO" id="GO:0042777">
    <property type="term" value="P:proton motive force-driven plasma membrane ATP synthesis"/>
    <property type="evidence" value="ECO:0007669"/>
    <property type="project" value="UniProtKB-UniRule"/>
</dbReference>
<dbReference type="CDD" id="cd18111">
    <property type="entry name" value="ATP-synt_V_A-type_alpha_C"/>
    <property type="match status" value="1"/>
</dbReference>
<dbReference type="CDD" id="cd18119">
    <property type="entry name" value="ATP-synt_V_A-type_alpha_N"/>
    <property type="match status" value="1"/>
</dbReference>
<dbReference type="CDD" id="cd01134">
    <property type="entry name" value="V_A-ATPase_A"/>
    <property type="match status" value="1"/>
</dbReference>
<dbReference type="FunFam" id="3.40.50.300:FF:000675">
    <property type="entry name" value="V-type ATP synthase alpha chain"/>
    <property type="match status" value="1"/>
</dbReference>
<dbReference type="FunFam" id="2.40.30.20:FF:000002">
    <property type="entry name" value="V-type proton ATPase catalytic subunit A"/>
    <property type="match status" value="1"/>
</dbReference>
<dbReference type="FunFam" id="2.40.50.100:FF:000008">
    <property type="entry name" value="V-type proton ATPase catalytic subunit A"/>
    <property type="match status" value="1"/>
</dbReference>
<dbReference type="Gene3D" id="2.40.30.20">
    <property type="match status" value="1"/>
</dbReference>
<dbReference type="Gene3D" id="2.40.50.100">
    <property type="match status" value="1"/>
</dbReference>
<dbReference type="Gene3D" id="1.10.1140.10">
    <property type="entry name" value="Bovine Mitochondrial F1-atpase, Atp Synthase Beta Chain, Chain D, domain 3"/>
    <property type="match status" value="1"/>
</dbReference>
<dbReference type="Gene3D" id="3.40.50.300">
    <property type="entry name" value="P-loop containing nucleotide triphosphate hydrolases"/>
    <property type="match status" value="1"/>
</dbReference>
<dbReference type="HAMAP" id="MF_00309">
    <property type="entry name" value="ATP_synth_A_arch"/>
    <property type="match status" value="1"/>
</dbReference>
<dbReference type="InterPro" id="IPR055190">
    <property type="entry name" value="ATP-synt_VA_C"/>
</dbReference>
<dbReference type="InterPro" id="IPR031686">
    <property type="entry name" value="ATP-synth_a_Xtn"/>
</dbReference>
<dbReference type="InterPro" id="IPR023366">
    <property type="entry name" value="ATP_synth_asu-like_sf"/>
</dbReference>
<dbReference type="InterPro" id="IPR020003">
    <property type="entry name" value="ATPase_a/bsu_AS"/>
</dbReference>
<dbReference type="InterPro" id="IPR004100">
    <property type="entry name" value="ATPase_F1/V1/A1_a/bsu_N"/>
</dbReference>
<dbReference type="InterPro" id="IPR036121">
    <property type="entry name" value="ATPase_F1/V1/A1_a/bsu_N_sf"/>
</dbReference>
<dbReference type="InterPro" id="IPR000194">
    <property type="entry name" value="ATPase_F1/V1/A1_a/bsu_nucl-bd"/>
</dbReference>
<dbReference type="InterPro" id="IPR024034">
    <property type="entry name" value="ATPase_F1/V1_b/a_C"/>
</dbReference>
<dbReference type="InterPro" id="IPR027417">
    <property type="entry name" value="P-loop_NTPase"/>
</dbReference>
<dbReference type="InterPro" id="IPR022878">
    <property type="entry name" value="V-ATPase_asu"/>
</dbReference>
<dbReference type="NCBIfam" id="NF003220">
    <property type="entry name" value="PRK04192.1"/>
    <property type="match status" value="1"/>
</dbReference>
<dbReference type="PANTHER" id="PTHR43607:SF1">
    <property type="entry name" value="H(+)-TRANSPORTING TWO-SECTOR ATPASE"/>
    <property type="match status" value="1"/>
</dbReference>
<dbReference type="PANTHER" id="PTHR43607">
    <property type="entry name" value="V-TYPE PROTON ATPASE CATALYTIC SUBUNIT A"/>
    <property type="match status" value="1"/>
</dbReference>
<dbReference type="Pfam" id="PF00006">
    <property type="entry name" value="ATP-synt_ab"/>
    <property type="match status" value="1"/>
</dbReference>
<dbReference type="Pfam" id="PF02874">
    <property type="entry name" value="ATP-synt_ab_N"/>
    <property type="match status" value="1"/>
</dbReference>
<dbReference type="Pfam" id="PF16886">
    <property type="entry name" value="ATP-synt_ab_Xtn"/>
    <property type="match status" value="1"/>
</dbReference>
<dbReference type="Pfam" id="PF22919">
    <property type="entry name" value="ATP-synt_VA_C"/>
    <property type="match status" value="1"/>
</dbReference>
<dbReference type="SUPFAM" id="SSF47917">
    <property type="entry name" value="C-terminal domain of alpha and beta subunits of F1 ATP synthase"/>
    <property type="match status" value="1"/>
</dbReference>
<dbReference type="SUPFAM" id="SSF50615">
    <property type="entry name" value="N-terminal domain of alpha and beta subunits of F1 ATP synthase"/>
    <property type="match status" value="1"/>
</dbReference>
<dbReference type="SUPFAM" id="SSF52540">
    <property type="entry name" value="P-loop containing nucleoside triphosphate hydrolases"/>
    <property type="match status" value="1"/>
</dbReference>
<dbReference type="PROSITE" id="PS00152">
    <property type="entry name" value="ATPASE_ALPHA_BETA"/>
    <property type="match status" value="1"/>
</dbReference>
<organism>
    <name type="scientific">Streptococcus pyogenes serotype M1</name>
    <dbReference type="NCBI Taxonomy" id="301447"/>
    <lineage>
        <taxon>Bacteria</taxon>
        <taxon>Bacillati</taxon>
        <taxon>Bacillota</taxon>
        <taxon>Bacilli</taxon>
        <taxon>Lactobacillales</taxon>
        <taxon>Streptococcaceae</taxon>
        <taxon>Streptococcus</taxon>
    </lineage>
</organism>
<gene>
    <name evidence="1" type="primary">atpA</name>
    <name type="synonym">ntpA</name>
    <name type="ordered locus">SPy_0154</name>
    <name type="ordered locus">M5005_Spy0131</name>
</gene>
<accession>Q9A1Q3</accession>
<accession>Q491G8</accession>
<keyword id="KW-0066">ATP synthesis</keyword>
<keyword id="KW-0067">ATP-binding</keyword>
<keyword id="KW-0375">Hydrogen ion transport</keyword>
<keyword id="KW-0406">Ion transport</keyword>
<keyword id="KW-0547">Nucleotide-binding</keyword>
<keyword id="KW-1185">Reference proteome</keyword>
<keyword id="KW-1278">Translocase</keyword>
<keyword id="KW-0813">Transport</keyword>